<name>ATPF_META1</name>
<gene>
    <name evidence="1" type="primary">atpF</name>
    <name type="ordered locus">MARTH_orf043</name>
</gene>
<protein>
    <recommendedName>
        <fullName evidence="1">ATP synthase subunit b</fullName>
    </recommendedName>
    <alternativeName>
        <fullName evidence="1">ATP synthase F(0) sector subunit b</fullName>
    </alternativeName>
    <alternativeName>
        <fullName evidence="1">ATPase subunit I</fullName>
    </alternativeName>
    <alternativeName>
        <fullName evidence="1">F-type ATPase subunit b</fullName>
        <shortName evidence="1">F-ATPase subunit b</shortName>
    </alternativeName>
</protein>
<evidence type="ECO:0000255" key="1">
    <source>
        <dbReference type="HAMAP-Rule" id="MF_01398"/>
    </source>
</evidence>
<comment type="function">
    <text evidence="1">F(1)F(0) ATP synthase produces ATP from ADP in the presence of a proton or sodium gradient. F-type ATPases consist of two structural domains, F(1) containing the extramembraneous catalytic core and F(0) containing the membrane proton channel, linked together by a central stalk and a peripheral stalk. During catalysis, ATP synthesis in the catalytic domain of F(1) is coupled via a rotary mechanism of the central stalk subunits to proton translocation.</text>
</comment>
<comment type="function">
    <text evidence="1">Component of the F(0) channel, it forms part of the peripheral stalk, linking F(1) to F(0).</text>
</comment>
<comment type="subunit">
    <text evidence="1">F-type ATPases have 2 components, F(1) - the catalytic core - and F(0) - the membrane proton channel. F(1) has five subunits: alpha(3), beta(3), gamma(1), delta(1), epsilon(1). F(0) has three main subunits: a(1), b(2) and c(10-14). The alpha and beta chains form an alternating ring which encloses part of the gamma chain. F(1) is attached to F(0) by a central stalk formed by the gamma and epsilon chains, while a peripheral stalk is formed by the delta and b chains.</text>
</comment>
<comment type="subcellular location">
    <subcellularLocation>
        <location evidence="1">Cell membrane</location>
        <topology evidence="1">Single-pass membrane protein</topology>
    </subcellularLocation>
</comment>
<comment type="similarity">
    <text evidence="1">Belongs to the ATPase B chain family.</text>
</comment>
<sequence>MNFNINQSSISDAITKTFGNLTINWPFFVFSFLTLILVVTIVTLLVYKPLKKMLKNRQNFIQNNIDESIKAKEAALKVQEEIDEKIIESSKHANQIIEQAKLERERIINNGIEVSNKKAEIIIEQANILVTKSQAEFENKQRKIIVENAVEIAKKIIGREIRDKDNLKMIEEMLES</sequence>
<organism>
    <name type="scientific">Metamycoplasma arthritidis (strain 158L3-1)</name>
    <name type="common">Mycoplasma arthritidis</name>
    <dbReference type="NCBI Taxonomy" id="243272"/>
    <lineage>
        <taxon>Bacteria</taxon>
        <taxon>Bacillati</taxon>
        <taxon>Mycoplasmatota</taxon>
        <taxon>Mycoplasmoidales</taxon>
        <taxon>Metamycoplasmataceae</taxon>
        <taxon>Metamycoplasma</taxon>
    </lineage>
</organism>
<dbReference type="EMBL" id="CP001047">
    <property type="protein sequence ID" value="ACF07006.1"/>
    <property type="molecule type" value="Genomic_DNA"/>
</dbReference>
<dbReference type="RefSeq" id="WP_012497963.1">
    <property type="nucleotide sequence ID" value="NC_011025.1"/>
</dbReference>
<dbReference type="SMR" id="B3PLV4"/>
<dbReference type="STRING" id="243272.MARTH_orf043"/>
<dbReference type="KEGG" id="mat:MARTH_orf043"/>
<dbReference type="eggNOG" id="COG0711">
    <property type="taxonomic scope" value="Bacteria"/>
</dbReference>
<dbReference type="HOGENOM" id="CLU_079215_4_3_14"/>
<dbReference type="Proteomes" id="UP000008812">
    <property type="component" value="Chromosome"/>
</dbReference>
<dbReference type="GO" id="GO:0005886">
    <property type="term" value="C:plasma membrane"/>
    <property type="evidence" value="ECO:0007669"/>
    <property type="project" value="UniProtKB-SubCell"/>
</dbReference>
<dbReference type="GO" id="GO:0045259">
    <property type="term" value="C:proton-transporting ATP synthase complex"/>
    <property type="evidence" value="ECO:0007669"/>
    <property type="project" value="UniProtKB-KW"/>
</dbReference>
<dbReference type="GO" id="GO:0046933">
    <property type="term" value="F:proton-transporting ATP synthase activity, rotational mechanism"/>
    <property type="evidence" value="ECO:0007669"/>
    <property type="project" value="UniProtKB-UniRule"/>
</dbReference>
<dbReference type="GO" id="GO:0046961">
    <property type="term" value="F:proton-transporting ATPase activity, rotational mechanism"/>
    <property type="evidence" value="ECO:0007669"/>
    <property type="project" value="TreeGrafter"/>
</dbReference>
<dbReference type="CDD" id="cd06503">
    <property type="entry name" value="ATP-synt_Fo_b"/>
    <property type="match status" value="1"/>
</dbReference>
<dbReference type="HAMAP" id="MF_01398">
    <property type="entry name" value="ATP_synth_b_bprime"/>
    <property type="match status" value="1"/>
</dbReference>
<dbReference type="InterPro" id="IPR002146">
    <property type="entry name" value="ATP_synth_b/b'su_bac/chlpt"/>
</dbReference>
<dbReference type="InterPro" id="IPR050059">
    <property type="entry name" value="ATP_synthase_B_chain"/>
</dbReference>
<dbReference type="PANTHER" id="PTHR33445">
    <property type="entry name" value="ATP SYNTHASE SUBUNIT B', CHLOROPLASTIC"/>
    <property type="match status" value="1"/>
</dbReference>
<dbReference type="PANTHER" id="PTHR33445:SF2">
    <property type="entry name" value="ATP SYNTHASE SUBUNIT B', CHLOROPLASTIC"/>
    <property type="match status" value="1"/>
</dbReference>
<dbReference type="Pfam" id="PF00430">
    <property type="entry name" value="ATP-synt_B"/>
    <property type="match status" value="1"/>
</dbReference>
<keyword id="KW-0066">ATP synthesis</keyword>
<keyword id="KW-1003">Cell membrane</keyword>
<keyword id="KW-0138">CF(0)</keyword>
<keyword id="KW-0375">Hydrogen ion transport</keyword>
<keyword id="KW-0406">Ion transport</keyword>
<keyword id="KW-0472">Membrane</keyword>
<keyword id="KW-1185">Reference proteome</keyword>
<keyword id="KW-0812">Transmembrane</keyword>
<keyword id="KW-1133">Transmembrane helix</keyword>
<keyword id="KW-0813">Transport</keyword>
<accession>B3PLV4</accession>
<reference key="1">
    <citation type="journal article" date="2008" name="Infect. Immun.">
        <title>Genome of Mycoplasma arthritidis.</title>
        <authorList>
            <person name="Dybvig K."/>
            <person name="Zuhua C."/>
            <person name="Lao P."/>
            <person name="Jordan D.S."/>
            <person name="French C.T."/>
            <person name="Tu A.H."/>
            <person name="Loraine A.E."/>
        </authorList>
    </citation>
    <scope>NUCLEOTIDE SEQUENCE [LARGE SCALE GENOMIC DNA]</scope>
    <source>
        <strain>158L3-1</strain>
    </source>
</reference>
<proteinExistence type="inferred from homology"/>
<feature type="chain" id="PRO_0000368607" description="ATP synthase subunit b">
    <location>
        <begin position="1"/>
        <end position="176"/>
    </location>
</feature>
<feature type="transmembrane region" description="Helical" evidence="1">
    <location>
        <begin position="27"/>
        <end position="47"/>
    </location>
</feature>